<reference key="1">
    <citation type="journal article" date="2003" name="Genome Res.">
        <title>Comparative complete genome sequence analysis of the amino acid replacements responsible for the thermostability of Corynebacterium efficiens.</title>
        <authorList>
            <person name="Nishio Y."/>
            <person name="Nakamura Y."/>
            <person name="Kawarabayasi Y."/>
            <person name="Usuda Y."/>
            <person name="Kimura E."/>
            <person name="Sugimoto S."/>
            <person name="Matsui K."/>
            <person name="Yamagishi A."/>
            <person name="Kikuchi H."/>
            <person name="Ikeo K."/>
            <person name="Gojobori T."/>
        </authorList>
    </citation>
    <scope>NUCLEOTIDE SEQUENCE [LARGE SCALE GENOMIC DNA]</scope>
    <source>
        <strain>DSM 44549 / YS-314 / AJ 12310 / JCM 11189 / NBRC 100395</strain>
    </source>
</reference>
<protein>
    <recommendedName>
        <fullName evidence="1">Large ribosomal subunit protein uL14</fullName>
    </recommendedName>
    <alternativeName>
        <fullName evidence="2">50S ribosomal protein L14</fullName>
    </alternativeName>
</protein>
<comment type="function">
    <text evidence="1">Binds to 23S rRNA. Forms part of two intersubunit bridges in the 70S ribosome.</text>
</comment>
<comment type="subunit">
    <text evidence="1">Part of the 50S ribosomal subunit. Forms a cluster with proteins L3 and L19. In the 70S ribosome, L14 and L19 interact and together make contacts with the 16S rRNA in bridges B5 and B8.</text>
</comment>
<comment type="similarity">
    <text evidence="1">Belongs to the universal ribosomal protein uL14 family.</text>
</comment>
<comment type="sequence caution" evidence="2">
    <conflict type="erroneous initiation">
        <sequence resource="EMBL-CDS" id="BAC17343"/>
    </conflict>
</comment>
<evidence type="ECO:0000255" key="1">
    <source>
        <dbReference type="HAMAP-Rule" id="MF_01367"/>
    </source>
</evidence>
<evidence type="ECO:0000305" key="2"/>
<organism>
    <name type="scientific">Corynebacterium efficiens (strain DSM 44549 / YS-314 / AJ 12310 / JCM 11189 / NBRC 100395)</name>
    <dbReference type="NCBI Taxonomy" id="196164"/>
    <lineage>
        <taxon>Bacteria</taxon>
        <taxon>Bacillati</taxon>
        <taxon>Actinomycetota</taxon>
        <taxon>Actinomycetes</taxon>
        <taxon>Mycobacteriales</taxon>
        <taxon>Corynebacteriaceae</taxon>
        <taxon>Corynebacterium</taxon>
    </lineage>
</organism>
<sequence>MIQQESRLKIADNTGAREILCIRVLGGSTRRFAGIGDVIVATVKEAAPGGNVKSGEIVKAVIVRTKKETRRADGSYISFDENAAVIIKNDNEPRGTRIFGPVARELREKKFMKIVSLAPEVI</sequence>
<gene>
    <name evidence="1" type="primary">rplN</name>
    <name type="ordered locus">CE0533</name>
</gene>
<dbReference type="EMBL" id="BA000035">
    <property type="protein sequence ID" value="BAC17343.1"/>
    <property type="status" value="ALT_INIT"/>
    <property type="molecule type" value="Genomic_DNA"/>
</dbReference>
<dbReference type="RefSeq" id="WP_011075030.1">
    <property type="nucleotide sequence ID" value="NZ_GG700687.1"/>
</dbReference>
<dbReference type="SMR" id="Q8FS71"/>
<dbReference type="STRING" id="196164.gene:10740935"/>
<dbReference type="KEGG" id="cef:CE0533"/>
<dbReference type="eggNOG" id="COG0093">
    <property type="taxonomic scope" value="Bacteria"/>
</dbReference>
<dbReference type="HOGENOM" id="CLU_095071_2_1_11"/>
<dbReference type="OrthoDB" id="9806379at2"/>
<dbReference type="Proteomes" id="UP000001409">
    <property type="component" value="Chromosome"/>
</dbReference>
<dbReference type="GO" id="GO:0022625">
    <property type="term" value="C:cytosolic large ribosomal subunit"/>
    <property type="evidence" value="ECO:0007669"/>
    <property type="project" value="TreeGrafter"/>
</dbReference>
<dbReference type="GO" id="GO:0070180">
    <property type="term" value="F:large ribosomal subunit rRNA binding"/>
    <property type="evidence" value="ECO:0007669"/>
    <property type="project" value="TreeGrafter"/>
</dbReference>
<dbReference type="GO" id="GO:0003735">
    <property type="term" value="F:structural constituent of ribosome"/>
    <property type="evidence" value="ECO:0007669"/>
    <property type="project" value="InterPro"/>
</dbReference>
<dbReference type="GO" id="GO:0006412">
    <property type="term" value="P:translation"/>
    <property type="evidence" value="ECO:0007669"/>
    <property type="project" value="UniProtKB-UniRule"/>
</dbReference>
<dbReference type="CDD" id="cd00337">
    <property type="entry name" value="Ribosomal_uL14"/>
    <property type="match status" value="1"/>
</dbReference>
<dbReference type="FunFam" id="2.40.150.20:FF:000001">
    <property type="entry name" value="50S ribosomal protein L14"/>
    <property type="match status" value="1"/>
</dbReference>
<dbReference type="Gene3D" id="2.40.150.20">
    <property type="entry name" value="Ribosomal protein L14"/>
    <property type="match status" value="1"/>
</dbReference>
<dbReference type="HAMAP" id="MF_01367">
    <property type="entry name" value="Ribosomal_uL14"/>
    <property type="match status" value="1"/>
</dbReference>
<dbReference type="InterPro" id="IPR000218">
    <property type="entry name" value="Ribosomal_uL14"/>
</dbReference>
<dbReference type="InterPro" id="IPR005745">
    <property type="entry name" value="Ribosomal_uL14_bac-type"/>
</dbReference>
<dbReference type="InterPro" id="IPR019972">
    <property type="entry name" value="Ribosomal_uL14_CS"/>
</dbReference>
<dbReference type="InterPro" id="IPR036853">
    <property type="entry name" value="Ribosomal_uL14_sf"/>
</dbReference>
<dbReference type="NCBIfam" id="TIGR01067">
    <property type="entry name" value="rplN_bact"/>
    <property type="match status" value="1"/>
</dbReference>
<dbReference type="PANTHER" id="PTHR11761">
    <property type="entry name" value="50S/60S RIBOSOMAL PROTEIN L14/L23"/>
    <property type="match status" value="1"/>
</dbReference>
<dbReference type="PANTHER" id="PTHR11761:SF3">
    <property type="entry name" value="LARGE RIBOSOMAL SUBUNIT PROTEIN UL14M"/>
    <property type="match status" value="1"/>
</dbReference>
<dbReference type="Pfam" id="PF00238">
    <property type="entry name" value="Ribosomal_L14"/>
    <property type="match status" value="1"/>
</dbReference>
<dbReference type="SMART" id="SM01374">
    <property type="entry name" value="Ribosomal_L14"/>
    <property type="match status" value="1"/>
</dbReference>
<dbReference type="SUPFAM" id="SSF50193">
    <property type="entry name" value="Ribosomal protein L14"/>
    <property type="match status" value="1"/>
</dbReference>
<dbReference type="PROSITE" id="PS00049">
    <property type="entry name" value="RIBOSOMAL_L14"/>
    <property type="match status" value="1"/>
</dbReference>
<name>RL14_COREF</name>
<proteinExistence type="inferred from homology"/>
<keyword id="KW-1185">Reference proteome</keyword>
<keyword id="KW-0687">Ribonucleoprotein</keyword>
<keyword id="KW-0689">Ribosomal protein</keyword>
<keyword id="KW-0694">RNA-binding</keyword>
<keyword id="KW-0699">rRNA-binding</keyword>
<feature type="chain" id="PRO_0000355813" description="Large ribosomal subunit protein uL14">
    <location>
        <begin position="1"/>
        <end position="122"/>
    </location>
</feature>
<accession>Q8FS71</accession>